<comment type="function">
    <text evidence="1">This protein is one of the two subunits of integration host factor, a specific DNA-binding protein that functions in genetic recombination as well as in transcriptional and translational control.</text>
</comment>
<comment type="subunit">
    <text evidence="1">Heterodimer of an alpha and a beta chain.</text>
</comment>
<comment type="similarity">
    <text evidence="1">Belongs to the bacterial histone-like protein family.</text>
</comment>
<reference key="1">
    <citation type="journal article" date="2006" name="Proc. Natl. Acad. Sci. U.S.A.">
        <title>Evolution of sensory complexity recorded in a myxobacterial genome.</title>
        <authorList>
            <person name="Goldman B.S."/>
            <person name="Nierman W.C."/>
            <person name="Kaiser D."/>
            <person name="Slater S.C."/>
            <person name="Durkin A.S."/>
            <person name="Eisen J.A."/>
            <person name="Ronning C.M."/>
            <person name="Barbazuk W.B."/>
            <person name="Blanchard M."/>
            <person name="Field C."/>
            <person name="Halling C."/>
            <person name="Hinkle G."/>
            <person name="Iartchuk O."/>
            <person name="Kim H.S."/>
            <person name="Mackenzie C."/>
            <person name="Madupu R."/>
            <person name="Miller N."/>
            <person name="Shvartsbeyn A."/>
            <person name="Sullivan S.A."/>
            <person name="Vaudin M."/>
            <person name="Wiegand R."/>
            <person name="Kaplan H.B."/>
        </authorList>
    </citation>
    <scope>NUCLEOTIDE SEQUENCE [LARGE SCALE GENOMIC DNA]</scope>
    <source>
        <strain>DK1622</strain>
    </source>
</reference>
<feature type="chain" id="PRO_0000277746" description="Integration host factor subunit alpha">
    <location>
        <begin position="1"/>
        <end position="129"/>
    </location>
</feature>
<feature type="region of interest" description="Disordered" evidence="2">
    <location>
        <begin position="87"/>
        <end position="129"/>
    </location>
</feature>
<feature type="compositionally biased region" description="Basic and acidic residues" evidence="2">
    <location>
        <begin position="95"/>
        <end position="117"/>
    </location>
</feature>
<feature type="compositionally biased region" description="Acidic residues" evidence="2">
    <location>
        <begin position="118"/>
        <end position="129"/>
    </location>
</feature>
<name>IHFA_MYXXD</name>
<dbReference type="EMBL" id="CP000113">
    <property type="protein sequence ID" value="ABF88874.1"/>
    <property type="molecule type" value="Genomic_DNA"/>
</dbReference>
<dbReference type="RefSeq" id="WP_002639669.1">
    <property type="nucleotide sequence ID" value="NC_008095.1"/>
</dbReference>
<dbReference type="SMR" id="Q1D6D8"/>
<dbReference type="STRING" id="246197.MXAN_3596"/>
<dbReference type="EnsemblBacteria" id="ABF88874">
    <property type="protein sequence ID" value="ABF88874"/>
    <property type="gene ID" value="MXAN_3596"/>
</dbReference>
<dbReference type="GeneID" id="41360942"/>
<dbReference type="KEGG" id="mxa:MXAN_3596"/>
<dbReference type="eggNOG" id="COG0776">
    <property type="taxonomic scope" value="Bacteria"/>
</dbReference>
<dbReference type="HOGENOM" id="CLU_105066_1_3_7"/>
<dbReference type="OrthoDB" id="9797747at2"/>
<dbReference type="Proteomes" id="UP000002402">
    <property type="component" value="Chromosome"/>
</dbReference>
<dbReference type="GO" id="GO:0005829">
    <property type="term" value="C:cytosol"/>
    <property type="evidence" value="ECO:0007669"/>
    <property type="project" value="TreeGrafter"/>
</dbReference>
<dbReference type="GO" id="GO:0003677">
    <property type="term" value="F:DNA binding"/>
    <property type="evidence" value="ECO:0007669"/>
    <property type="project" value="UniProtKB-UniRule"/>
</dbReference>
<dbReference type="GO" id="GO:0030527">
    <property type="term" value="F:structural constituent of chromatin"/>
    <property type="evidence" value="ECO:0007669"/>
    <property type="project" value="InterPro"/>
</dbReference>
<dbReference type="GO" id="GO:0006310">
    <property type="term" value="P:DNA recombination"/>
    <property type="evidence" value="ECO:0007669"/>
    <property type="project" value="UniProtKB-UniRule"/>
</dbReference>
<dbReference type="GO" id="GO:0009893">
    <property type="term" value="P:positive regulation of metabolic process"/>
    <property type="evidence" value="ECO:0007669"/>
    <property type="project" value="UniProtKB-ARBA"/>
</dbReference>
<dbReference type="GO" id="GO:0006355">
    <property type="term" value="P:regulation of DNA-templated transcription"/>
    <property type="evidence" value="ECO:0007669"/>
    <property type="project" value="UniProtKB-UniRule"/>
</dbReference>
<dbReference type="GO" id="GO:0006417">
    <property type="term" value="P:regulation of translation"/>
    <property type="evidence" value="ECO:0007669"/>
    <property type="project" value="UniProtKB-UniRule"/>
</dbReference>
<dbReference type="CDD" id="cd13835">
    <property type="entry name" value="IHF_A"/>
    <property type="match status" value="1"/>
</dbReference>
<dbReference type="FunFam" id="4.10.520.10:FF:000010">
    <property type="entry name" value="Integration host factor subunit alpha"/>
    <property type="match status" value="1"/>
</dbReference>
<dbReference type="Gene3D" id="4.10.520.10">
    <property type="entry name" value="IHF-like DNA-binding proteins"/>
    <property type="match status" value="1"/>
</dbReference>
<dbReference type="HAMAP" id="MF_00380">
    <property type="entry name" value="IHF_alpha"/>
    <property type="match status" value="1"/>
</dbReference>
<dbReference type="InterPro" id="IPR000119">
    <property type="entry name" value="Hist_DNA-bd"/>
</dbReference>
<dbReference type="InterPro" id="IPR020816">
    <property type="entry name" value="Histone-like_DNA-bd_CS"/>
</dbReference>
<dbReference type="InterPro" id="IPR010992">
    <property type="entry name" value="IHF-like_DNA-bd_dom_sf"/>
</dbReference>
<dbReference type="InterPro" id="IPR005684">
    <property type="entry name" value="IHF_alpha"/>
</dbReference>
<dbReference type="NCBIfam" id="TIGR00987">
    <property type="entry name" value="himA"/>
    <property type="match status" value="1"/>
</dbReference>
<dbReference type="NCBIfam" id="NF001401">
    <property type="entry name" value="PRK00285.1"/>
    <property type="match status" value="1"/>
</dbReference>
<dbReference type="PANTHER" id="PTHR33175">
    <property type="entry name" value="DNA-BINDING PROTEIN HU"/>
    <property type="match status" value="1"/>
</dbReference>
<dbReference type="PANTHER" id="PTHR33175:SF2">
    <property type="entry name" value="INTEGRATION HOST FACTOR SUBUNIT ALPHA"/>
    <property type="match status" value="1"/>
</dbReference>
<dbReference type="Pfam" id="PF00216">
    <property type="entry name" value="Bac_DNA_binding"/>
    <property type="match status" value="1"/>
</dbReference>
<dbReference type="PRINTS" id="PR01727">
    <property type="entry name" value="DNABINDINGHU"/>
</dbReference>
<dbReference type="SMART" id="SM00411">
    <property type="entry name" value="BHL"/>
    <property type="match status" value="1"/>
</dbReference>
<dbReference type="SUPFAM" id="SSF47729">
    <property type="entry name" value="IHF-like DNA-binding proteins"/>
    <property type="match status" value="1"/>
</dbReference>
<dbReference type="PROSITE" id="PS00045">
    <property type="entry name" value="HISTONE_LIKE"/>
    <property type="match status" value="1"/>
</dbReference>
<accession>Q1D6D8</accession>
<protein>
    <recommendedName>
        <fullName evidence="1">Integration host factor subunit alpha</fullName>
        <shortName evidence="1">IHF-alpha</shortName>
    </recommendedName>
</protein>
<gene>
    <name evidence="1" type="primary">ihfA</name>
    <name evidence="1" type="synonym">himA</name>
    <name type="ordered locus">MXAN_3596</name>
</gene>
<sequence length="129" mass="14300">MTKADIIEGVYEKVGFSKKESAEIVELVFDTLKETLERGDKIKISGFGNFQVRQKKARVGRNPQTGKEIEISARRVLTFRPSQVLKSALNGEAPPEDHAEIDAREEAAADAAEARGEDFDEEGMEDMEG</sequence>
<evidence type="ECO:0000255" key="1">
    <source>
        <dbReference type="HAMAP-Rule" id="MF_00380"/>
    </source>
</evidence>
<evidence type="ECO:0000256" key="2">
    <source>
        <dbReference type="SAM" id="MobiDB-lite"/>
    </source>
</evidence>
<proteinExistence type="inferred from homology"/>
<keyword id="KW-0233">DNA recombination</keyword>
<keyword id="KW-0238">DNA-binding</keyword>
<keyword id="KW-1185">Reference proteome</keyword>
<keyword id="KW-0804">Transcription</keyword>
<keyword id="KW-0805">Transcription regulation</keyword>
<keyword id="KW-0810">Translation regulation</keyword>
<organism>
    <name type="scientific">Myxococcus xanthus (strain DK1622)</name>
    <dbReference type="NCBI Taxonomy" id="246197"/>
    <lineage>
        <taxon>Bacteria</taxon>
        <taxon>Pseudomonadati</taxon>
        <taxon>Myxococcota</taxon>
        <taxon>Myxococcia</taxon>
        <taxon>Myxococcales</taxon>
        <taxon>Cystobacterineae</taxon>
        <taxon>Myxococcaceae</taxon>
        <taxon>Myxococcus</taxon>
    </lineage>
</organism>